<sequence length="281" mass="31830">MAFHMATRYAHSPEDIKHFDTTKLRQEFLMEKIFNAGDILLTYTYNDRMIFGGVVPTESSLEIKLSKELGVDFFLQRRELGVINIGGPGSIIVDGDKAAMVKQDGYYIGMGTKQVVFASDNPANPAKFYVVSTPAHKTYPNKKLPFANALAKPMGDQQHLNKRTIYKYIDASQMATCQLQMGYTVLEPGSSWNTMPAHTHARRMETYMYFDFAEPDTRVLHLLGEPTETRHIALFNEQAVVNPSWSIHCGVGTTNYAFIWAMCGENQTYDDMDQVPMNELR</sequence>
<protein>
    <recommendedName>
        <fullName evidence="1">4-deoxy-L-threo-5-hexosulose-uronate ketol-isomerase</fullName>
        <ecNumber evidence="1">5.3.1.17</ecNumber>
    </recommendedName>
    <alternativeName>
        <fullName evidence="1">5-keto-4-deoxyuronate isomerase</fullName>
    </alternativeName>
    <alternativeName>
        <fullName evidence="1">DKI isomerase</fullName>
    </alternativeName>
</protein>
<dbReference type="EC" id="5.3.1.17" evidence="1"/>
<dbReference type="EMBL" id="CP000423">
    <property type="protein sequence ID" value="ABJ71390.1"/>
    <property type="molecule type" value="Genomic_DNA"/>
</dbReference>
<dbReference type="RefSeq" id="WP_011674967.1">
    <property type="nucleotide sequence ID" value="NC_008526.1"/>
</dbReference>
<dbReference type="RefSeq" id="YP_807832.1">
    <property type="nucleotide sequence ID" value="NC_008526.1"/>
</dbReference>
<dbReference type="SMR" id="Q034I2"/>
<dbReference type="STRING" id="321967.LSEI_2671"/>
<dbReference type="PaxDb" id="321967-LSEI_2671"/>
<dbReference type="KEGG" id="lca:LSEI_2671"/>
<dbReference type="PATRIC" id="fig|321967.11.peg.2615"/>
<dbReference type="HOGENOM" id="CLU_062609_0_0_9"/>
<dbReference type="UniPathway" id="UPA00545">
    <property type="reaction ID" value="UER00826"/>
</dbReference>
<dbReference type="Proteomes" id="UP000001651">
    <property type="component" value="Chromosome"/>
</dbReference>
<dbReference type="GO" id="GO:0008697">
    <property type="term" value="F:4-deoxy-L-threo-5-hexosulose-uronate ketol-isomerase activity"/>
    <property type="evidence" value="ECO:0007669"/>
    <property type="project" value="UniProtKB-UniRule"/>
</dbReference>
<dbReference type="GO" id="GO:0008270">
    <property type="term" value="F:zinc ion binding"/>
    <property type="evidence" value="ECO:0007669"/>
    <property type="project" value="UniProtKB-UniRule"/>
</dbReference>
<dbReference type="GO" id="GO:0019698">
    <property type="term" value="P:D-galacturonate catabolic process"/>
    <property type="evidence" value="ECO:0007669"/>
    <property type="project" value="TreeGrafter"/>
</dbReference>
<dbReference type="GO" id="GO:0042840">
    <property type="term" value="P:D-glucuronate catabolic process"/>
    <property type="evidence" value="ECO:0007669"/>
    <property type="project" value="TreeGrafter"/>
</dbReference>
<dbReference type="GO" id="GO:0045490">
    <property type="term" value="P:pectin catabolic process"/>
    <property type="evidence" value="ECO:0007669"/>
    <property type="project" value="UniProtKB-UniRule"/>
</dbReference>
<dbReference type="CDD" id="cd20491">
    <property type="entry name" value="cupin_KduI_C"/>
    <property type="match status" value="1"/>
</dbReference>
<dbReference type="CDD" id="cd20294">
    <property type="entry name" value="cupin_KduI_N"/>
    <property type="match status" value="1"/>
</dbReference>
<dbReference type="Gene3D" id="2.60.120.10">
    <property type="entry name" value="Jelly Rolls"/>
    <property type="match status" value="1"/>
</dbReference>
<dbReference type="Gene3D" id="2.60.120.520">
    <property type="entry name" value="pectin degrading enzyme 5-keto 4- deoxyuronate isomerase, domain 1"/>
    <property type="match status" value="1"/>
</dbReference>
<dbReference type="HAMAP" id="MF_00687">
    <property type="entry name" value="KduI"/>
    <property type="match status" value="1"/>
</dbReference>
<dbReference type="InterPro" id="IPR007045">
    <property type="entry name" value="KduI"/>
</dbReference>
<dbReference type="InterPro" id="IPR021120">
    <property type="entry name" value="KduI/IolB_isomerase"/>
</dbReference>
<dbReference type="InterPro" id="IPR027449">
    <property type="entry name" value="KduI_N"/>
</dbReference>
<dbReference type="InterPro" id="IPR014710">
    <property type="entry name" value="RmlC-like_jellyroll"/>
</dbReference>
<dbReference type="InterPro" id="IPR011051">
    <property type="entry name" value="RmlC_Cupin_sf"/>
</dbReference>
<dbReference type="NCBIfam" id="NF002091">
    <property type="entry name" value="PRK00924.1"/>
    <property type="match status" value="1"/>
</dbReference>
<dbReference type="PANTHER" id="PTHR38461">
    <property type="entry name" value="4-DEOXY-L-THREO-5-HEXOSULOSE-URONATE KETOL-ISOMERASE"/>
    <property type="match status" value="1"/>
</dbReference>
<dbReference type="PANTHER" id="PTHR38461:SF1">
    <property type="entry name" value="4-DEOXY-L-THREO-5-HEXOSULOSE-URONATE KETOL-ISOMERASE"/>
    <property type="match status" value="1"/>
</dbReference>
<dbReference type="Pfam" id="PF04962">
    <property type="entry name" value="KduI"/>
    <property type="match status" value="1"/>
</dbReference>
<dbReference type="PIRSF" id="PIRSF006625">
    <property type="entry name" value="KduI"/>
    <property type="match status" value="1"/>
</dbReference>
<dbReference type="SUPFAM" id="SSF51182">
    <property type="entry name" value="RmlC-like cupins"/>
    <property type="match status" value="1"/>
</dbReference>
<organism>
    <name type="scientific">Lacticaseibacillus paracasei (strain ATCC 334 / BCRC 17002 / CCUG 31169 / CIP 107868 / KCTC 3260 / NRRL B-441)</name>
    <name type="common">Lactobacillus paracasei</name>
    <dbReference type="NCBI Taxonomy" id="321967"/>
    <lineage>
        <taxon>Bacteria</taxon>
        <taxon>Bacillati</taxon>
        <taxon>Bacillota</taxon>
        <taxon>Bacilli</taxon>
        <taxon>Lactobacillales</taxon>
        <taxon>Lactobacillaceae</taxon>
        <taxon>Lacticaseibacillus</taxon>
    </lineage>
</organism>
<gene>
    <name evidence="1" type="primary">kduI</name>
    <name type="ordered locus">LSEI_2671</name>
</gene>
<accession>Q034I2</accession>
<comment type="function">
    <text evidence="1">Catalyzes the isomerization of 5-dehydro-4-deoxy-D-glucuronate to 3-deoxy-D-glycero-2,5-hexodiulosonate.</text>
</comment>
<comment type="catalytic activity">
    <reaction evidence="1">
        <text>5-dehydro-4-deoxy-D-glucuronate = 3-deoxy-D-glycero-2,5-hexodiulosonate</text>
        <dbReference type="Rhea" id="RHEA:23896"/>
        <dbReference type="ChEBI" id="CHEBI:17117"/>
        <dbReference type="ChEBI" id="CHEBI:29071"/>
        <dbReference type="EC" id="5.3.1.17"/>
    </reaction>
</comment>
<comment type="cofactor">
    <cofactor evidence="1">
        <name>Zn(2+)</name>
        <dbReference type="ChEBI" id="CHEBI:29105"/>
    </cofactor>
    <text evidence="1">Binds 1 zinc ion per subunit.</text>
</comment>
<comment type="pathway">
    <text evidence="1">Glycan metabolism; pectin degradation; 2-dehydro-3-deoxy-D-gluconate from pectin: step 4/5.</text>
</comment>
<comment type="similarity">
    <text evidence="1">Belongs to the KduI family.</text>
</comment>
<proteinExistence type="inferred from homology"/>
<evidence type="ECO:0000255" key="1">
    <source>
        <dbReference type="HAMAP-Rule" id="MF_00687"/>
    </source>
</evidence>
<keyword id="KW-0413">Isomerase</keyword>
<keyword id="KW-0479">Metal-binding</keyword>
<keyword id="KW-1185">Reference proteome</keyword>
<keyword id="KW-0862">Zinc</keyword>
<reference key="1">
    <citation type="journal article" date="2006" name="Proc. Natl. Acad. Sci. U.S.A.">
        <title>Comparative genomics of the lactic acid bacteria.</title>
        <authorList>
            <person name="Makarova K.S."/>
            <person name="Slesarev A."/>
            <person name="Wolf Y.I."/>
            <person name="Sorokin A."/>
            <person name="Mirkin B."/>
            <person name="Koonin E.V."/>
            <person name="Pavlov A."/>
            <person name="Pavlova N."/>
            <person name="Karamychev V."/>
            <person name="Polouchine N."/>
            <person name="Shakhova V."/>
            <person name="Grigoriev I."/>
            <person name="Lou Y."/>
            <person name="Rohksar D."/>
            <person name="Lucas S."/>
            <person name="Huang K."/>
            <person name="Goodstein D.M."/>
            <person name="Hawkins T."/>
            <person name="Plengvidhya V."/>
            <person name="Welker D."/>
            <person name="Hughes J."/>
            <person name="Goh Y."/>
            <person name="Benson A."/>
            <person name="Baldwin K."/>
            <person name="Lee J.-H."/>
            <person name="Diaz-Muniz I."/>
            <person name="Dosti B."/>
            <person name="Smeianov V."/>
            <person name="Wechter W."/>
            <person name="Barabote R."/>
            <person name="Lorca G."/>
            <person name="Altermann E."/>
            <person name="Barrangou R."/>
            <person name="Ganesan B."/>
            <person name="Xie Y."/>
            <person name="Rawsthorne H."/>
            <person name="Tamir D."/>
            <person name="Parker C."/>
            <person name="Breidt F."/>
            <person name="Broadbent J.R."/>
            <person name="Hutkins R."/>
            <person name="O'Sullivan D."/>
            <person name="Steele J."/>
            <person name="Unlu G."/>
            <person name="Saier M.H. Jr."/>
            <person name="Klaenhammer T."/>
            <person name="Richardson P."/>
            <person name="Kozyavkin S."/>
            <person name="Weimer B.C."/>
            <person name="Mills D.A."/>
        </authorList>
    </citation>
    <scope>NUCLEOTIDE SEQUENCE [LARGE SCALE GENOMIC DNA]</scope>
    <source>
        <strain>ATCC 334 / BCRC 17002 / CCUG 31169 / CIP 107868 / KCTC 3260 / NRRL B-441</strain>
    </source>
</reference>
<name>KDUI_LACP3</name>
<feature type="chain" id="PRO_1000083091" description="4-deoxy-L-threo-5-hexosulose-uronate ketol-isomerase">
    <location>
        <begin position="1"/>
        <end position="281"/>
    </location>
</feature>
<feature type="binding site" evidence="1">
    <location>
        <position position="198"/>
    </location>
    <ligand>
        <name>Zn(2+)</name>
        <dbReference type="ChEBI" id="CHEBI:29105"/>
    </ligand>
</feature>
<feature type="binding site" evidence="1">
    <location>
        <position position="200"/>
    </location>
    <ligand>
        <name>Zn(2+)</name>
        <dbReference type="ChEBI" id="CHEBI:29105"/>
    </ligand>
</feature>
<feature type="binding site" evidence="1">
    <location>
        <position position="205"/>
    </location>
    <ligand>
        <name>Zn(2+)</name>
        <dbReference type="ChEBI" id="CHEBI:29105"/>
    </ligand>
</feature>
<feature type="binding site" evidence="1">
    <location>
        <position position="248"/>
    </location>
    <ligand>
        <name>Zn(2+)</name>
        <dbReference type="ChEBI" id="CHEBI:29105"/>
    </ligand>
</feature>